<dbReference type="EMBL" id="AF489394">
    <property type="protein sequence ID" value="AAM92681.1"/>
    <property type="molecule type" value="Genomic_DNA"/>
</dbReference>
<dbReference type="GO" id="GO:0009507">
    <property type="term" value="C:chloroplast"/>
    <property type="evidence" value="ECO:0007669"/>
    <property type="project" value="UniProtKB-SubCell"/>
</dbReference>
<dbReference type="GO" id="GO:0003723">
    <property type="term" value="F:RNA binding"/>
    <property type="evidence" value="ECO:0007669"/>
    <property type="project" value="UniProtKB-KW"/>
</dbReference>
<dbReference type="GO" id="GO:0006397">
    <property type="term" value="P:mRNA processing"/>
    <property type="evidence" value="ECO:0007669"/>
    <property type="project" value="UniProtKB-KW"/>
</dbReference>
<dbReference type="GO" id="GO:0008380">
    <property type="term" value="P:RNA splicing"/>
    <property type="evidence" value="ECO:0007669"/>
    <property type="project" value="UniProtKB-UniRule"/>
</dbReference>
<dbReference type="GO" id="GO:0008033">
    <property type="term" value="P:tRNA processing"/>
    <property type="evidence" value="ECO:0007669"/>
    <property type="project" value="UniProtKB-KW"/>
</dbReference>
<dbReference type="HAMAP" id="MF_01390">
    <property type="entry name" value="MatK"/>
    <property type="match status" value="1"/>
</dbReference>
<dbReference type="InterPro" id="IPR024937">
    <property type="entry name" value="Domain_X"/>
</dbReference>
<dbReference type="InterPro" id="IPR002866">
    <property type="entry name" value="Maturase_MatK"/>
</dbReference>
<dbReference type="InterPro" id="IPR024942">
    <property type="entry name" value="Maturase_MatK_N"/>
</dbReference>
<dbReference type="PANTHER" id="PTHR34811">
    <property type="entry name" value="MATURASE K"/>
    <property type="match status" value="1"/>
</dbReference>
<dbReference type="PANTHER" id="PTHR34811:SF1">
    <property type="entry name" value="MATURASE K"/>
    <property type="match status" value="1"/>
</dbReference>
<dbReference type="Pfam" id="PF01348">
    <property type="entry name" value="Intron_maturas2"/>
    <property type="match status" value="1"/>
</dbReference>
<dbReference type="Pfam" id="PF01824">
    <property type="entry name" value="MatK_N"/>
    <property type="match status" value="1"/>
</dbReference>
<geneLocation type="chloroplast"/>
<sequence>MEEFQGYLELDISRQHDLLYALLFREYIYALAHDHGLNRSILFENAGYDNKSSSIIVKRLITRMYQPNRLIFSSKDSIQNPFFGHNKNLYSQIISEGFAVIVEIPFSLRLVFSLERKEMAKSHNLRSIHSIFPFLEDKFIHLDYVLDVLIPYYIHLEILVQPLRYWVKDASSLHLLRFFLHEYCNSLITPKKHITFFSKGNPRLFLFLYNSHICEYEYIFLFLRNQSSHLRSTSSGIFFERIYFYVKIZHFFKVFFDNNFQCILWFFKDPFMHYVRYQGXFFLASKDTSLQMNKWKYYLVNFWQYHFYAWFQPGRININQLVKYSLDFLGYRSNARLNSSLVRSQMLENLFLINNAMNKFETIVPIISLIGSLYKANFCNTFGHPISKPTRTDSSDSDIIDRFLRICRNLSHYHSGSSKKKSLYQVKYILRLSCVKTLARKHKRTVRTFVKRLGSEFLQEFLTEEEVVLSLIFPRTYSTSRRLYRGHIWYLDITSIKHLXNYE</sequence>
<reference key="1">
    <citation type="journal article" date="2005" name="Plant Syst. Evol.">
        <title>Relationships within Myrtaceae sensu lato based on a matK phylogeny.</title>
        <authorList>
            <person name="Wilson P.G."/>
            <person name="O'Brien M.M."/>
            <person name="Heslewood M.M."/>
            <person name="Quinn C.J."/>
        </authorList>
    </citation>
    <scope>NUCLEOTIDE SEQUENCE [GENOMIC DNA]</scope>
</reference>
<proteinExistence type="inferred from homology"/>
<keyword id="KW-0150">Chloroplast</keyword>
<keyword id="KW-0507">mRNA processing</keyword>
<keyword id="KW-0934">Plastid</keyword>
<keyword id="KW-0694">RNA-binding</keyword>
<keyword id="KW-0819">tRNA processing</keyword>
<feature type="chain" id="PRO_0000143209" description="Maturase K">
    <location>
        <begin position="1"/>
        <end position="503"/>
    </location>
</feature>
<gene>
    <name evidence="1" type="primary">matK</name>
</gene>
<evidence type="ECO:0000255" key="1">
    <source>
        <dbReference type="HAMAP-Rule" id="MF_01390"/>
    </source>
</evidence>
<organism>
    <name type="scientific">Actinodium cunninghamii</name>
    <name type="common">Albany daisy</name>
    <dbReference type="NCBI Taxonomy" id="199376"/>
    <lineage>
        <taxon>Eukaryota</taxon>
        <taxon>Viridiplantae</taxon>
        <taxon>Streptophyta</taxon>
        <taxon>Embryophyta</taxon>
        <taxon>Tracheophyta</taxon>
        <taxon>Spermatophyta</taxon>
        <taxon>Magnoliopsida</taxon>
        <taxon>eudicotyledons</taxon>
        <taxon>Gunneridae</taxon>
        <taxon>Pentapetalae</taxon>
        <taxon>rosids</taxon>
        <taxon>malvids</taxon>
        <taxon>Myrtales</taxon>
        <taxon>Myrtaceae</taxon>
        <taxon>Myrtoideae</taxon>
        <taxon>Chamelaucieae</taxon>
        <taxon>Actinodium</taxon>
    </lineage>
</organism>
<accession>Q8MDD1</accession>
<protein>
    <recommendedName>
        <fullName evidence="1">Maturase K</fullName>
    </recommendedName>
    <alternativeName>
        <fullName evidence="1">Intron maturase</fullName>
    </alternativeName>
</protein>
<name>MATK_ACTCU</name>
<comment type="function">
    <text evidence="1">Usually encoded in the trnK tRNA gene intron. Probably assists in splicing its own and other chloroplast group II introns.</text>
</comment>
<comment type="subcellular location">
    <subcellularLocation>
        <location>Plastid</location>
        <location>Chloroplast</location>
    </subcellularLocation>
</comment>
<comment type="similarity">
    <text evidence="1">Belongs to the intron maturase 2 family. MatK subfamily.</text>
</comment>